<keyword id="KW-0067">ATP-binding</keyword>
<keyword id="KW-0436">Ligase</keyword>
<keyword id="KW-0547">Nucleotide-binding</keyword>
<keyword id="KW-0658">Purine biosynthesis</keyword>
<keyword id="KW-1185">Reference proteome</keyword>
<feature type="chain" id="PRO_0000100844" description="Phosphoribosylaminoimidazole-succinocarboxamide synthase">
    <location>
        <begin position="1"/>
        <end position="297"/>
    </location>
</feature>
<sequence length="297" mass="32930">MRPALSDYQHVASGKVREIYRVDDEHLLLVASDRISAYDYVLDSTIPDKGRVLTAMSAFFFGLVDAPNHLAGPPDDPRIPDEVLGRALVVRRLEMLPVECVARGYLTGSGLLDYQATGKVCGIALPPGLVEASRFATPLFTPATKAALGDHDENISFDRVVEMVGALRANQLRDRTLQTYVQAADHALTRGIIIADTKFEFGIDRHGNLLLADEIFTPDSSRYWPADDYRAGVVQTSFDKQFVRSWLTGSESGWDRGSDRPPPPLPEHIVEATRARYINAYERISELKFDDWIGPGA</sequence>
<dbReference type="EC" id="6.3.2.6"/>
<dbReference type="EMBL" id="LT708304">
    <property type="protein sequence ID" value="SIT99402.1"/>
    <property type="molecule type" value="Genomic_DNA"/>
</dbReference>
<dbReference type="RefSeq" id="NP_854461.1">
    <property type="nucleotide sequence ID" value="NC_002945.3"/>
</dbReference>
<dbReference type="RefSeq" id="WP_003403962.1">
    <property type="nucleotide sequence ID" value="NC_002945.4"/>
</dbReference>
<dbReference type="SMR" id="P0A5T5"/>
<dbReference type="KEGG" id="mbo:BQ2027_MB0803"/>
<dbReference type="PATRIC" id="fig|233413.5.peg.873"/>
<dbReference type="UniPathway" id="UPA00074">
    <property type="reaction ID" value="UER00131"/>
</dbReference>
<dbReference type="Proteomes" id="UP000001419">
    <property type="component" value="Chromosome"/>
</dbReference>
<dbReference type="GO" id="GO:0005737">
    <property type="term" value="C:cytoplasm"/>
    <property type="evidence" value="ECO:0007669"/>
    <property type="project" value="TreeGrafter"/>
</dbReference>
<dbReference type="GO" id="GO:0005524">
    <property type="term" value="F:ATP binding"/>
    <property type="evidence" value="ECO:0007669"/>
    <property type="project" value="UniProtKB-KW"/>
</dbReference>
<dbReference type="GO" id="GO:0004639">
    <property type="term" value="F:phosphoribosylaminoimidazolesuccinocarboxamide synthase activity"/>
    <property type="evidence" value="ECO:0007669"/>
    <property type="project" value="UniProtKB-UniRule"/>
</dbReference>
<dbReference type="GO" id="GO:0006189">
    <property type="term" value="P:'de novo' IMP biosynthetic process"/>
    <property type="evidence" value="ECO:0007669"/>
    <property type="project" value="UniProtKB-UniRule"/>
</dbReference>
<dbReference type="CDD" id="cd01414">
    <property type="entry name" value="SAICAR_synt_Sc"/>
    <property type="match status" value="1"/>
</dbReference>
<dbReference type="FunFam" id="3.30.200.20:FF:000199">
    <property type="entry name" value="Phosphoribosylaminoimidazole-succinocarboxamide synthase"/>
    <property type="match status" value="1"/>
</dbReference>
<dbReference type="FunFam" id="3.30.470.20:FF:000015">
    <property type="entry name" value="Phosphoribosylaminoimidazole-succinocarboxamide synthase"/>
    <property type="match status" value="1"/>
</dbReference>
<dbReference type="Gene3D" id="3.30.470.20">
    <property type="entry name" value="ATP-grasp fold, B domain"/>
    <property type="match status" value="1"/>
</dbReference>
<dbReference type="Gene3D" id="3.30.200.20">
    <property type="entry name" value="Phosphorylase Kinase, domain 1"/>
    <property type="match status" value="1"/>
</dbReference>
<dbReference type="HAMAP" id="MF_00137">
    <property type="entry name" value="SAICAR_synth"/>
    <property type="match status" value="1"/>
</dbReference>
<dbReference type="InterPro" id="IPR028923">
    <property type="entry name" value="SAICAR_synt/ADE2_N"/>
</dbReference>
<dbReference type="InterPro" id="IPR001636">
    <property type="entry name" value="SAICAR_synth"/>
</dbReference>
<dbReference type="InterPro" id="IPR018236">
    <property type="entry name" value="SAICAR_synthetase_CS"/>
</dbReference>
<dbReference type="NCBIfam" id="NF010568">
    <property type="entry name" value="PRK13961.1"/>
    <property type="match status" value="1"/>
</dbReference>
<dbReference type="NCBIfam" id="TIGR00081">
    <property type="entry name" value="purC"/>
    <property type="match status" value="1"/>
</dbReference>
<dbReference type="PANTHER" id="PTHR43700">
    <property type="entry name" value="PHOSPHORIBOSYLAMINOIMIDAZOLE-SUCCINOCARBOXAMIDE SYNTHASE"/>
    <property type="match status" value="1"/>
</dbReference>
<dbReference type="PANTHER" id="PTHR43700:SF1">
    <property type="entry name" value="PHOSPHORIBOSYLAMINOIMIDAZOLE-SUCCINOCARBOXAMIDE SYNTHASE"/>
    <property type="match status" value="1"/>
</dbReference>
<dbReference type="Pfam" id="PF01259">
    <property type="entry name" value="SAICAR_synt"/>
    <property type="match status" value="1"/>
</dbReference>
<dbReference type="SUPFAM" id="SSF56104">
    <property type="entry name" value="SAICAR synthase-like"/>
    <property type="match status" value="1"/>
</dbReference>
<dbReference type="PROSITE" id="PS01057">
    <property type="entry name" value="SAICAR_SYNTHETASE_1"/>
    <property type="match status" value="1"/>
</dbReference>
<dbReference type="PROSITE" id="PS01058">
    <property type="entry name" value="SAICAR_SYNTHETASE_2"/>
    <property type="match status" value="1"/>
</dbReference>
<reference key="1">
    <citation type="journal article" date="2003" name="Proc. Natl. Acad. Sci. U.S.A.">
        <title>The complete genome sequence of Mycobacterium bovis.</title>
        <authorList>
            <person name="Garnier T."/>
            <person name="Eiglmeier K."/>
            <person name="Camus J.-C."/>
            <person name="Medina N."/>
            <person name="Mansoor H."/>
            <person name="Pryor M."/>
            <person name="Duthoy S."/>
            <person name="Grondin S."/>
            <person name="Lacroix C."/>
            <person name="Monsempe C."/>
            <person name="Simon S."/>
            <person name="Harris B."/>
            <person name="Atkin R."/>
            <person name="Doggett J."/>
            <person name="Mayes R."/>
            <person name="Keating L."/>
            <person name="Wheeler P.R."/>
            <person name="Parkhill J."/>
            <person name="Barrell B.G."/>
            <person name="Cole S.T."/>
            <person name="Gordon S.V."/>
            <person name="Hewinson R.G."/>
        </authorList>
    </citation>
    <scope>NUCLEOTIDE SEQUENCE [LARGE SCALE GENOMIC DNA]</scope>
    <source>
        <strain>ATCC BAA-935 / AF2122/97</strain>
    </source>
</reference>
<reference key="2">
    <citation type="journal article" date="2017" name="Genome Announc.">
        <title>Updated reference genome sequence and annotation of Mycobacterium bovis AF2122/97.</title>
        <authorList>
            <person name="Malone K.M."/>
            <person name="Farrell D."/>
            <person name="Stuber T.P."/>
            <person name="Schubert O.T."/>
            <person name="Aebersold R."/>
            <person name="Robbe-Austerman S."/>
            <person name="Gordon S.V."/>
        </authorList>
    </citation>
    <scope>NUCLEOTIDE SEQUENCE [LARGE SCALE GENOMIC DNA]</scope>
    <scope>GENOME REANNOTATION</scope>
    <source>
        <strain>ATCC BAA-935 / AF2122/97</strain>
    </source>
</reference>
<evidence type="ECO:0000305" key="1"/>
<accession>P0A5T5</accession>
<accession>A0A1R3XYI3</accession>
<accession>P77904</accession>
<accession>Q59566</accession>
<accession>X2BG03</accession>
<comment type="catalytic activity">
    <reaction>
        <text>5-amino-1-(5-phospho-D-ribosyl)imidazole-4-carboxylate + L-aspartate + ATP = (2S)-2-[5-amino-1-(5-phospho-beta-D-ribosyl)imidazole-4-carboxamido]succinate + ADP + phosphate + 2 H(+)</text>
        <dbReference type="Rhea" id="RHEA:22628"/>
        <dbReference type="ChEBI" id="CHEBI:15378"/>
        <dbReference type="ChEBI" id="CHEBI:29991"/>
        <dbReference type="ChEBI" id="CHEBI:30616"/>
        <dbReference type="ChEBI" id="CHEBI:43474"/>
        <dbReference type="ChEBI" id="CHEBI:58443"/>
        <dbReference type="ChEBI" id="CHEBI:77657"/>
        <dbReference type="ChEBI" id="CHEBI:456216"/>
        <dbReference type="EC" id="6.3.2.6"/>
    </reaction>
</comment>
<comment type="pathway">
    <text>Purine metabolism; IMP biosynthesis via de novo pathway; 5-amino-1-(5-phospho-D-ribosyl)imidazole-4-carboxamide from 5-amino-1-(5-phospho-D-ribosyl)imidazole-4-carboxylate: step 1/2.</text>
</comment>
<comment type="similarity">
    <text evidence="1">Belongs to the SAICAR synthetase family.</text>
</comment>
<protein>
    <recommendedName>
        <fullName>Phosphoribosylaminoimidazole-succinocarboxamide synthase</fullName>
        <ecNumber>6.3.2.6</ecNumber>
    </recommendedName>
    <alternativeName>
        <fullName>SAICAR synthetase</fullName>
    </alternativeName>
</protein>
<name>PUR7_MYCBO</name>
<organism>
    <name type="scientific">Mycobacterium bovis (strain ATCC BAA-935 / AF2122/97)</name>
    <dbReference type="NCBI Taxonomy" id="233413"/>
    <lineage>
        <taxon>Bacteria</taxon>
        <taxon>Bacillati</taxon>
        <taxon>Actinomycetota</taxon>
        <taxon>Actinomycetes</taxon>
        <taxon>Mycobacteriales</taxon>
        <taxon>Mycobacteriaceae</taxon>
        <taxon>Mycobacterium</taxon>
        <taxon>Mycobacterium tuberculosis complex</taxon>
    </lineage>
</organism>
<proteinExistence type="inferred from homology"/>
<gene>
    <name type="primary">purC</name>
    <name type="ordered locus">BQ2027_MB0803</name>
</gene>